<reference key="1">
    <citation type="submission" date="2006-10" db="EMBL/GenBank/DDBJ databases">
        <authorList>
            <person name="Fleischmann R.D."/>
            <person name="Dodson R.J."/>
            <person name="Haft D.H."/>
            <person name="Merkel J.S."/>
            <person name="Nelson W.C."/>
            <person name="Fraser C.M."/>
        </authorList>
    </citation>
    <scope>NUCLEOTIDE SEQUENCE [LARGE SCALE GENOMIC DNA]</scope>
    <source>
        <strain>ATCC 700084 / mc(2)155</strain>
    </source>
</reference>
<reference key="2">
    <citation type="journal article" date="2007" name="Genome Biol.">
        <title>Interrupted coding sequences in Mycobacterium smegmatis: authentic mutations or sequencing errors?</title>
        <authorList>
            <person name="Deshayes C."/>
            <person name="Perrodou E."/>
            <person name="Gallien S."/>
            <person name="Euphrasie D."/>
            <person name="Schaeffer C."/>
            <person name="Van-Dorsselaer A."/>
            <person name="Poch O."/>
            <person name="Lecompte O."/>
            <person name="Reyrat J.-M."/>
        </authorList>
    </citation>
    <scope>NUCLEOTIDE SEQUENCE [LARGE SCALE GENOMIC DNA]</scope>
    <source>
        <strain>ATCC 700084 / mc(2)155</strain>
    </source>
</reference>
<reference key="3">
    <citation type="journal article" date="2009" name="Genome Res.">
        <title>Ortho-proteogenomics: multiple proteomes investigation through orthology and a new MS-based protocol.</title>
        <authorList>
            <person name="Gallien S."/>
            <person name="Perrodou E."/>
            <person name="Carapito C."/>
            <person name="Deshayes C."/>
            <person name="Reyrat J.-M."/>
            <person name="Van Dorsselaer A."/>
            <person name="Poch O."/>
            <person name="Schaeffer C."/>
            <person name="Lecompte O."/>
        </authorList>
    </citation>
    <scope>NUCLEOTIDE SEQUENCE [LARGE SCALE GENOMIC DNA]</scope>
    <source>
        <strain>ATCC 700084 / mc(2)155</strain>
    </source>
</reference>
<reference key="4">
    <citation type="journal article" date="2012" name="Nat. Struct. Mol. Biol.">
        <title>Cyclic AMP regulation of protein lysine acetylation in Mycobacterium tuberculosis.</title>
        <authorList>
            <person name="Lee H.J."/>
            <person name="Lang P.T."/>
            <person name="Fortune S.M."/>
            <person name="Sassetti C.M."/>
            <person name="Alber T."/>
        </authorList>
    </citation>
    <scope>ACETYLATION AT LYS-104</scope>
    <scope>MUTAGENESIS OF LYS-104</scope>
    <scope>IDENTIFICATION BY MASS SPECTROMETRY</scope>
</reference>
<proteinExistence type="evidence at protein level"/>
<name>Y4207_MYCS2</name>
<keyword id="KW-0007">Acetylation</keyword>
<keyword id="KW-1185">Reference proteome</keyword>
<organism>
    <name type="scientific">Mycolicibacterium smegmatis (strain ATCC 700084 / mc(2)155)</name>
    <name type="common">Mycobacterium smegmatis</name>
    <dbReference type="NCBI Taxonomy" id="246196"/>
    <lineage>
        <taxon>Bacteria</taxon>
        <taxon>Bacillati</taxon>
        <taxon>Actinomycetota</taxon>
        <taxon>Actinomycetes</taxon>
        <taxon>Mycobacteriales</taxon>
        <taxon>Mycobacteriaceae</taxon>
        <taxon>Mycolicibacterium</taxon>
    </lineage>
</organism>
<accession>A0QZZ6</accession>
<gene>
    <name type="ordered locus">MSMEG_4207</name>
    <name type="ordered locus">MSMEI_4109</name>
</gene>
<protein>
    <recommendedName>
        <fullName>Universal stress protein MSMEG_4207</fullName>
        <shortName>Usp</shortName>
    </recommendedName>
</protein>
<sequence>MIVVGYSADPFGRAAVEHGIEEAKRRDTGLLVINATAGDAYVDARFARSGEVHDVEAHLQDSGVPFEIRQPVGVDATEELLTAMDSPDAELLVIGIRHRNPVGKLLLGSVAQRLLLECPKPVLAVKPHGF</sequence>
<dbReference type="EMBL" id="CP000480">
    <property type="protein sequence ID" value="ABK72172.1"/>
    <property type="molecule type" value="Genomic_DNA"/>
</dbReference>
<dbReference type="EMBL" id="CP001663">
    <property type="protein sequence ID" value="AFP40566.1"/>
    <property type="molecule type" value="Genomic_DNA"/>
</dbReference>
<dbReference type="RefSeq" id="WP_011729640.1">
    <property type="nucleotide sequence ID" value="NZ_SIJM01000003.1"/>
</dbReference>
<dbReference type="RefSeq" id="YP_888484.1">
    <property type="nucleotide sequence ID" value="NC_008596.1"/>
</dbReference>
<dbReference type="SMR" id="A0QZZ6"/>
<dbReference type="STRING" id="246196.MSMEG_4207"/>
<dbReference type="iPTMnet" id="A0QZZ6"/>
<dbReference type="PaxDb" id="246196-MSMEI_4109"/>
<dbReference type="KEGG" id="msb:LJ00_20860"/>
<dbReference type="KEGG" id="msg:MSMEI_4109"/>
<dbReference type="KEGG" id="msm:MSMEG_4207"/>
<dbReference type="PATRIC" id="fig|246196.19.peg.4128"/>
<dbReference type="eggNOG" id="COG0589">
    <property type="taxonomic scope" value="Bacteria"/>
</dbReference>
<dbReference type="OrthoDB" id="5419113at2"/>
<dbReference type="Proteomes" id="UP000000757">
    <property type="component" value="Chromosome"/>
</dbReference>
<dbReference type="Proteomes" id="UP000006158">
    <property type="component" value="Chromosome"/>
</dbReference>
<dbReference type="CDD" id="cd00293">
    <property type="entry name" value="USP-like"/>
    <property type="match status" value="1"/>
</dbReference>
<dbReference type="Gene3D" id="3.40.50.620">
    <property type="entry name" value="HUPs"/>
    <property type="match status" value="1"/>
</dbReference>
<dbReference type="InterPro" id="IPR014729">
    <property type="entry name" value="Rossmann-like_a/b/a_fold"/>
</dbReference>
<dbReference type="InterPro" id="IPR006015">
    <property type="entry name" value="Universal_stress_UspA"/>
</dbReference>
<dbReference type="InterPro" id="IPR006016">
    <property type="entry name" value="UspA"/>
</dbReference>
<dbReference type="Pfam" id="PF00582">
    <property type="entry name" value="Usp"/>
    <property type="match status" value="1"/>
</dbReference>
<dbReference type="PRINTS" id="PR01438">
    <property type="entry name" value="UNVRSLSTRESS"/>
</dbReference>
<dbReference type="SUPFAM" id="SSF52402">
    <property type="entry name" value="Adenine nucleotide alpha hydrolases-like"/>
    <property type="match status" value="1"/>
</dbReference>
<comment type="PTM">
    <text evidence="1">Acetylated on Lys-104 by PatA in the presence of acetyl-CoA as an acetyl donor.</text>
</comment>
<comment type="similarity">
    <text evidence="2">Belongs to the universal stress protein A family.</text>
</comment>
<evidence type="ECO:0000269" key="1">
    <source>
    </source>
</evidence>
<evidence type="ECO:0000305" key="2"/>
<feature type="chain" id="PRO_0000420363" description="Universal stress protein MSMEG_4207">
    <location>
        <begin position="1"/>
        <end position="130"/>
    </location>
</feature>
<feature type="modified residue" description="N6-acetyllysine" evidence="1">
    <location>
        <position position="104"/>
    </location>
</feature>
<feature type="mutagenesis site" description="No acetylation is observed." evidence="1">
    <original>K</original>
    <variation>R</variation>
    <location>
        <position position="104"/>
    </location>
</feature>